<sequence length="315" mass="37202">MHGHGGYDSDFSDDEQGGGSSKKRKKTVEDELLLTKPFQKERHGKVAHKQVAADLLDREEARNRRFHLIAMDAYQRHTKFVNDYILYYGGKREDFKRLGENDKTDLDVIRENHRFLWNEEDEADMTWEKRLAKKYYDKLFKEYCIADLSRYKENKFGFRWRIEKEVISGKGQFFCGNKCCNEKEGLRSWEVNFGYTEHGEKRNALVKLRLCQECSFKLNFHHRRKEIKSTKKKSKTTPECDESPRKKSRSPPSEEASKGKDEGHSSSKKSEDSRNRNAEEEDSASDSELWKGPLPETDEKSQEEEFDDYFQDLFL</sequence>
<evidence type="ECO:0000250" key="1">
    <source>
        <dbReference type="UniProtKB" id="Q5FVF1"/>
    </source>
</evidence>
<evidence type="ECO:0000250" key="2">
    <source>
        <dbReference type="UniProtKB" id="Q70Z53"/>
    </source>
</evidence>
<evidence type="ECO:0000256" key="3">
    <source>
        <dbReference type="SAM" id="MobiDB-lite"/>
    </source>
</evidence>
<evidence type="ECO:0000305" key="4"/>
<evidence type="ECO:0007744" key="5">
    <source>
    </source>
</evidence>
<evidence type="ECO:0007744" key="6">
    <source>
    </source>
</evidence>
<evidence type="ECO:0007744" key="7">
    <source>
    </source>
</evidence>
<reference key="1">
    <citation type="journal article" date="2005" name="Science">
        <title>The transcriptional landscape of the mammalian genome.</title>
        <authorList>
            <person name="Carninci P."/>
            <person name="Kasukawa T."/>
            <person name="Katayama S."/>
            <person name="Gough J."/>
            <person name="Frith M.C."/>
            <person name="Maeda N."/>
            <person name="Oyama R."/>
            <person name="Ravasi T."/>
            <person name="Lenhard B."/>
            <person name="Wells C."/>
            <person name="Kodzius R."/>
            <person name="Shimokawa K."/>
            <person name="Bajic V.B."/>
            <person name="Brenner S.E."/>
            <person name="Batalov S."/>
            <person name="Forrest A.R."/>
            <person name="Zavolan M."/>
            <person name="Davis M.J."/>
            <person name="Wilming L.G."/>
            <person name="Aidinis V."/>
            <person name="Allen J.E."/>
            <person name="Ambesi-Impiombato A."/>
            <person name="Apweiler R."/>
            <person name="Aturaliya R.N."/>
            <person name="Bailey T.L."/>
            <person name="Bansal M."/>
            <person name="Baxter L."/>
            <person name="Beisel K.W."/>
            <person name="Bersano T."/>
            <person name="Bono H."/>
            <person name="Chalk A.M."/>
            <person name="Chiu K.P."/>
            <person name="Choudhary V."/>
            <person name="Christoffels A."/>
            <person name="Clutterbuck D.R."/>
            <person name="Crowe M.L."/>
            <person name="Dalla E."/>
            <person name="Dalrymple B.P."/>
            <person name="de Bono B."/>
            <person name="Della Gatta G."/>
            <person name="di Bernardo D."/>
            <person name="Down T."/>
            <person name="Engstrom P."/>
            <person name="Fagiolini M."/>
            <person name="Faulkner G."/>
            <person name="Fletcher C.F."/>
            <person name="Fukushima T."/>
            <person name="Furuno M."/>
            <person name="Futaki S."/>
            <person name="Gariboldi M."/>
            <person name="Georgii-Hemming P."/>
            <person name="Gingeras T.R."/>
            <person name="Gojobori T."/>
            <person name="Green R.E."/>
            <person name="Gustincich S."/>
            <person name="Harbers M."/>
            <person name="Hayashi Y."/>
            <person name="Hensch T.K."/>
            <person name="Hirokawa N."/>
            <person name="Hill D."/>
            <person name="Huminiecki L."/>
            <person name="Iacono M."/>
            <person name="Ikeo K."/>
            <person name="Iwama A."/>
            <person name="Ishikawa T."/>
            <person name="Jakt M."/>
            <person name="Kanapin A."/>
            <person name="Katoh M."/>
            <person name="Kawasawa Y."/>
            <person name="Kelso J."/>
            <person name="Kitamura H."/>
            <person name="Kitano H."/>
            <person name="Kollias G."/>
            <person name="Krishnan S.P."/>
            <person name="Kruger A."/>
            <person name="Kummerfeld S.K."/>
            <person name="Kurochkin I.V."/>
            <person name="Lareau L.F."/>
            <person name="Lazarevic D."/>
            <person name="Lipovich L."/>
            <person name="Liu J."/>
            <person name="Liuni S."/>
            <person name="McWilliam S."/>
            <person name="Madan Babu M."/>
            <person name="Madera M."/>
            <person name="Marchionni L."/>
            <person name="Matsuda H."/>
            <person name="Matsuzawa S."/>
            <person name="Miki H."/>
            <person name="Mignone F."/>
            <person name="Miyake S."/>
            <person name="Morris K."/>
            <person name="Mottagui-Tabar S."/>
            <person name="Mulder N."/>
            <person name="Nakano N."/>
            <person name="Nakauchi H."/>
            <person name="Ng P."/>
            <person name="Nilsson R."/>
            <person name="Nishiguchi S."/>
            <person name="Nishikawa S."/>
            <person name="Nori F."/>
            <person name="Ohara O."/>
            <person name="Okazaki Y."/>
            <person name="Orlando V."/>
            <person name="Pang K.C."/>
            <person name="Pavan W.J."/>
            <person name="Pavesi G."/>
            <person name="Pesole G."/>
            <person name="Petrovsky N."/>
            <person name="Piazza S."/>
            <person name="Reed J."/>
            <person name="Reid J.F."/>
            <person name="Ring B.Z."/>
            <person name="Ringwald M."/>
            <person name="Rost B."/>
            <person name="Ruan Y."/>
            <person name="Salzberg S.L."/>
            <person name="Sandelin A."/>
            <person name="Schneider C."/>
            <person name="Schoenbach C."/>
            <person name="Sekiguchi K."/>
            <person name="Semple C.A."/>
            <person name="Seno S."/>
            <person name="Sessa L."/>
            <person name="Sheng Y."/>
            <person name="Shibata Y."/>
            <person name="Shimada H."/>
            <person name="Shimada K."/>
            <person name="Silva D."/>
            <person name="Sinclair B."/>
            <person name="Sperling S."/>
            <person name="Stupka E."/>
            <person name="Sugiura K."/>
            <person name="Sultana R."/>
            <person name="Takenaka Y."/>
            <person name="Taki K."/>
            <person name="Tammoja K."/>
            <person name="Tan S.L."/>
            <person name="Tang S."/>
            <person name="Taylor M.S."/>
            <person name="Tegner J."/>
            <person name="Teichmann S.A."/>
            <person name="Ueda H.R."/>
            <person name="van Nimwegen E."/>
            <person name="Verardo R."/>
            <person name="Wei C.L."/>
            <person name="Yagi K."/>
            <person name="Yamanishi H."/>
            <person name="Zabarovsky E."/>
            <person name="Zhu S."/>
            <person name="Zimmer A."/>
            <person name="Hide W."/>
            <person name="Bult C."/>
            <person name="Grimmond S.M."/>
            <person name="Teasdale R.D."/>
            <person name="Liu E.T."/>
            <person name="Brusic V."/>
            <person name="Quackenbush J."/>
            <person name="Wahlestedt C."/>
            <person name="Mattick J.S."/>
            <person name="Hume D.A."/>
            <person name="Kai C."/>
            <person name="Sasaki D."/>
            <person name="Tomaru Y."/>
            <person name="Fukuda S."/>
            <person name="Kanamori-Katayama M."/>
            <person name="Suzuki M."/>
            <person name="Aoki J."/>
            <person name="Arakawa T."/>
            <person name="Iida J."/>
            <person name="Imamura K."/>
            <person name="Itoh M."/>
            <person name="Kato T."/>
            <person name="Kawaji H."/>
            <person name="Kawagashira N."/>
            <person name="Kawashima T."/>
            <person name="Kojima M."/>
            <person name="Kondo S."/>
            <person name="Konno H."/>
            <person name="Nakano K."/>
            <person name="Ninomiya N."/>
            <person name="Nishio T."/>
            <person name="Okada M."/>
            <person name="Plessy C."/>
            <person name="Shibata K."/>
            <person name="Shiraki T."/>
            <person name="Suzuki S."/>
            <person name="Tagami M."/>
            <person name="Waki K."/>
            <person name="Watahiki A."/>
            <person name="Okamura-Oho Y."/>
            <person name="Suzuki H."/>
            <person name="Kawai J."/>
            <person name="Hayashizaki Y."/>
        </authorList>
    </citation>
    <scope>NUCLEOTIDE SEQUENCE [LARGE SCALE MRNA]</scope>
    <source>
        <strain>C57BL/6J</strain>
        <strain>NOD</strain>
        <tissue>Embryo</tissue>
        <tissue>Spleen</tissue>
    </source>
</reference>
<reference key="2">
    <citation type="journal article" date="2009" name="PLoS Biol.">
        <title>Lineage-specific biology revealed by a finished genome assembly of the mouse.</title>
        <authorList>
            <person name="Church D.M."/>
            <person name="Goodstadt L."/>
            <person name="Hillier L.W."/>
            <person name="Zody M.C."/>
            <person name="Goldstein S."/>
            <person name="She X."/>
            <person name="Bult C.J."/>
            <person name="Agarwala R."/>
            <person name="Cherry J.L."/>
            <person name="DiCuccio M."/>
            <person name="Hlavina W."/>
            <person name="Kapustin Y."/>
            <person name="Meric P."/>
            <person name="Maglott D."/>
            <person name="Birtle Z."/>
            <person name="Marques A.C."/>
            <person name="Graves T."/>
            <person name="Zhou S."/>
            <person name="Teague B."/>
            <person name="Potamousis K."/>
            <person name="Churas C."/>
            <person name="Place M."/>
            <person name="Herschleb J."/>
            <person name="Runnheim R."/>
            <person name="Forrest D."/>
            <person name="Amos-Landgraf J."/>
            <person name="Schwartz D.C."/>
            <person name="Cheng Z."/>
            <person name="Lindblad-Toh K."/>
            <person name="Eichler E.E."/>
            <person name="Ponting C.P."/>
        </authorList>
    </citation>
    <scope>NUCLEOTIDE SEQUENCE [LARGE SCALE GENOMIC DNA]</scope>
    <source>
        <strain>C57BL/6J</strain>
    </source>
</reference>
<reference key="3">
    <citation type="journal article" date="2004" name="Genomics">
        <title>Folate-sensitive fragile site FRA10A is due to an expansion of a CGG repeat in a novel gene, FRA10AC1, encoding a nuclear protein.</title>
        <authorList>
            <person name="Sarafidou T."/>
            <person name="Kahl C."/>
            <person name="Martinez-Garay I."/>
            <person name="Mangelsdorf M."/>
            <person name="Gesk S."/>
            <person name="Baker E."/>
            <person name="Kokkinaki M."/>
            <person name="Talley P."/>
            <person name="Maltby E.L."/>
            <person name="French L."/>
            <person name="Harder L."/>
            <person name="Hinzmann B."/>
            <person name="Nobile C."/>
            <person name="Richkind K."/>
            <person name="Finnis M."/>
            <person name="Deloukas P."/>
            <person name="Sutherland G.R."/>
            <person name="Kutsche K."/>
            <person name="Moschonas N.K."/>
            <person name="Siebert R."/>
            <person name="Gecz J."/>
        </authorList>
    </citation>
    <scope>IDENTIFICATION</scope>
</reference>
<reference key="4">
    <citation type="journal article" date="2007" name="Proc. Natl. Acad. Sci. U.S.A.">
        <title>Large-scale phosphorylation analysis of mouse liver.</title>
        <authorList>
            <person name="Villen J."/>
            <person name="Beausoleil S.A."/>
            <person name="Gerber S.A."/>
            <person name="Gygi S.P."/>
        </authorList>
    </citation>
    <scope>ACETYLATION [LARGE SCALE ANALYSIS] AT MET-1</scope>
    <scope>PHOSPHORYLATION [LARGE SCALE ANALYSIS] AT SER-12; SER-283 AND SER-285</scope>
    <scope>IDENTIFICATION BY MASS SPECTROMETRY [LARGE SCALE ANALYSIS]</scope>
    <source>
        <tissue>Liver</tissue>
    </source>
</reference>
<reference key="5">
    <citation type="journal article" date="2010" name="Cell">
        <title>A tissue-specific atlas of mouse protein phosphorylation and expression.</title>
        <authorList>
            <person name="Huttlin E.L."/>
            <person name="Jedrychowski M.P."/>
            <person name="Elias J.E."/>
            <person name="Goswami T."/>
            <person name="Rad R."/>
            <person name="Beausoleil S.A."/>
            <person name="Villen J."/>
            <person name="Haas W."/>
            <person name="Sowa M.E."/>
            <person name="Gygi S.P."/>
        </authorList>
    </citation>
    <scope>PHOSPHORYLATION [LARGE SCALE ANALYSIS] AT SER-283 AND SER-285</scope>
    <scope>IDENTIFICATION BY MASS SPECTROMETRY [LARGE SCALE ANALYSIS]</scope>
    <source>
        <tissue>Kidney</tissue>
        <tissue>Lung</tissue>
        <tissue>Spleen</tissue>
        <tissue>Testis</tissue>
    </source>
</reference>
<reference key="6">
    <citation type="journal article" date="2013" name="Mol. Cell">
        <title>SIRT5-mediated lysine desuccinylation impacts diverse metabolic pathways.</title>
        <authorList>
            <person name="Park J."/>
            <person name="Chen Y."/>
            <person name="Tishkoff D.X."/>
            <person name="Peng C."/>
            <person name="Tan M."/>
            <person name="Dai L."/>
            <person name="Xie Z."/>
            <person name="Zhang Y."/>
            <person name="Zwaans B.M."/>
            <person name="Skinner M.E."/>
            <person name="Lombard D.B."/>
            <person name="Zhao Y."/>
        </authorList>
    </citation>
    <scope>ACETYLATION [LARGE SCALE ANALYSIS] AT LYS-36</scope>
    <scope>IDENTIFICATION BY MASS SPECTROMETRY [LARGE SCALE ANALYSIS]</scope>
    <source>
        <tissue>Embryonic fibroblast</tissue>
    </source>
</reference>
<comment type="function">
    <text evidence="2">May be involved in pre-mRNA splicing.</text>
</comment>
<comment type="subunit">
    <text evidence="2">Interacts with ESS2.</text>
</comment>
<comment type="subcellular location">
    <subcellularLocation>
        <location evidence="2">Nucleus</location>
    </subcellularLocation>
</comment>
<comment type="sequence caution" evidence="4">
    <conflict type="miscellaneous discrepancy">
        <sequence resource="EMBL" id="AK017666"/>
    </conflict>
    <text>Intron retention.</text>
</comment>
<comment type="sequence caution" evidence="4">
    <conflict type="erroneous initiation">
        <sequence resource="EMBL-CDS" id="BAC36871"/>
    </conflict>
    <text>Extended N-terminus.</text>
</comment>
<organism>
    <name type="scientific">Mus musculus</name>
    <name type="common">Mouse</name>
    <dbReference type="NCBI Taxonomy" id="10090"/>
    <lineage>
        <taxon>Eukaryota</taxon>
        <taxon>Metazoa</taxon>
        <taxon>Chordata</taxon>
        <taxon>Craniata</taxon>
        <taxon>Vertebrata</taxon>
        <taxon>Euteleostomi</taxon>
        <taxon>Mammalia</taxon>
        <taxon>Eutheria</taxon>
        <taxon>Euarchontoglires</taxon>
        <taxon>Glires</taxon>
        <taxon>Rodentia</taxon>
        <taxon>Myomorpha</taxon>
        <taxon>Muroidea</taxon>
        <taxon>Muridae</taxon>
        <taxon>Murinae</taxon>
        <taxon>Mus</taxon>
        <taxon>Mus</taxon>
    </lineage>
</organism>
<dbReference type="EMBL" id="AK017666">
    <property type="status" value="NOT_ANNOTATED_CDS"/>
    <property type="molecule type" value="mRNA"/>
</dbReference>
<dbReference type="EMBL" id="AK077572">
    <property type="protein sequence ID" value="BAC36871.1"/>
    <property type="status" value="ALT_INIT"/>
    <property type="molecule type" value="mRNA"/>
</dbReference>
<dbReference type="EMBL" id="AK172241">
    <property type="protein sequence ID" value="BAE42904.1"/>
    <property type="molecule type" value="mRNA"/>
</dbReference>
<dbReference type="EMBL" id="AC112153">
    <property type="status" value="NOT_ANNOTATED_CDS"/>
    <property type="molecule type" value="Genomic_DNA"/>
</dbReference>
<dbReference type="EMBL" id="BN000292">
    <property type="protein sequence ID" value="CAE47417.1"/>
    <property type="molecule type" value="mRNA"/>
</dbReference>
<dbReference type="CCDS" id="CCDS37972.1"/>
<dbReference type="RefSeq" id="NP_001074544.1">
    <property type="nucleotide sequence ID" value="NM_001081075.2"/>
</dbReference>
<dbReference type="RefSeq" id="XP_006527397.1">
    <property type="nucleotide sequence ID" value="XM_006527334.3"/>
</dbReference>
<dbReference type="RefSeq" id="XP_006527398.1">
    <property type="nucleotide sequence ID" value="XM_006527335.4"/>
</dbReference>
<dbReference type="BioGRID" id="214139">
    <property type="interactions" value="2"/>
</dbReference>
<dbReference type="FunCoup" id="Q8BP78">
    <property type="interactions" value="1305"/>
</dbReference>
<dbReference type="STRING" id="10090.ENSMUSP00000070534"/>
<dbReference type="iPTMnet" id="Q8BP78"/>
<dbReference type="PhosphoSitePlus" id="Q8BP78"/>
<dbReference type="jPOST" id="Q8BP78"/>
<dbReference type="PaxDb" id="10090-ENSMUSP00000070534"/>
<dbReference type="PeptideAtlas" id="Q8BP78"/>
<dbReference type="ProteomicsDB" id="275956"/>
<dbReference type="Pumba" id="Q8BP78"/>
<dbReference type="Antibodypedia" id="30489">
    <property type="antibodies" value="101 antibodies from 17 providers"/>
</dbReference>
<dbReference type="DNASU" id="70567"/>
<dbReference type="Ensembl" id="ENSMUST00000067167.6">
    <property type="protein sequence ID" value="ENSMUSP00000070534.6"/>
    <property type="gene ID" value="ENSMUSG00000054237.7"/>
</dbReference>
<dbReference type="GeneID" id="70567"/>
<dbReference type="KEGG" id="mmu:70567"/>
<dbReference type="UCSC" id="uc008hjg.1">
    <property type="organism name" value="mouse"/>
</dbReference>
<dbReference type="AGR" id="MGI:1917817"/>
<dbReference type="CTD" id="118924"/>
<dbReference type="MGI" id="MGI:1917817">
    <property type="gene designation" value="Fra10ac1"/>
</dbReference>
<dbReference type="VEuPathDB" id="HostDB:ENSMUSG00000054237"/>
<dbReference type="eggNOG" id="KOG1297">
    <property type="taxonomic scope" value="Eukaryota"/>
</dbReference>
<dbReference type="GeneTree" id="ENSGT00390000017833"/>
<dbReference type="HOGENOM" id="CLU_061714_0_1_1"/>
<dbReference type="InParanoid" id="Q8BP78"/>
<dbReference type="OMA" id="EYFQDMF"/>
<dbReference type="OrthoDB" id="197967at2759"/>
<dbReference type="PhylomeDB" id="Q8BP78"/>
<dbReference type="TreeFam" id="TF323667"/>
<dbReference type="BioGRID-ORCS" id="70567">
    <property type="hits" value="0 hits in 77 CRISPR screens"/>
</dbReference>
<dbReference type="ChiTaRS" id="Fra10ac1">
    <property type="organism name" value="mouse"/>
</dbReference>
<dbReference type="PRO" id="PR:Q8BP78"/>
<dbReference type="Proteomes" id="UP000000589">
    <property type="component" value="Chromosome 19"/>
</dbReference>
<dbReference type="RNAct" id="Q8BP78">
    <property type="molecule type" value="protein"/>
</dbReference>
<dbReference type="Bgee" id="ENSMUSG00000054237">
    <property type="expression patterns" value="Expressed in otolith organ and 232 other cell types or tissues"/>
</dbReference>
<dbReference type="GO" id="GO:0005634">
    <property type="term" value="C:nucleus"/>
    <property type="evidence" value="ECO:0000250"/>
    <property type="project" value="UniProtKB"/>
</dbReference>
<dbReference type="GO" id="GO:0000398">
    <property type="term" value="P:mRNA splicing, via spliceosome"/>
    <property type="evidence" value="ECO:0000250"/>
    <property type="project" value="UniProtKB"/>
</dbReference>
<dbReference type="InterPro" id="IPR019129">
    <property type="entry name" value="Folate-sensitive_fs_Fra10Ac1"/>
</dbReference>
<dbReference type="InterPro" id="IPR050645">
    <property type="entry name" value="Histidine_acid_phosphatase"/>
</dbReference>
<dbReference type="PANTHER" id="PTHR11567">
    <property type="entry name" value="ACID PHOSPHATASE-RELATED"/>
    <property type="match status" value="1"/>
</dbReference>
<dbReference type="PANTHER" id="PTHR11567:SF25">
    <property type="entry name" value="PROTEIN FRA10AC1"/>
    <property type="match status" value="1"/>
</dbReference>
<dbReference type="Pfam" id="PF09725">
    <property type="entry name" value="Fra10Ac1"/>
    <property type="match status" value="1"/>
</dbReference>
<accession>Q8BP78</accession>
<accession>F8VPM5</accession>
<accession>Q1LZ54</accession>
<accession>Q3T9W6</accession>
<name>F10C1_MOUSE</name>
<keyword id="KW-0007">Acetylation</keyword>
<keyword id="KW-0539">Nucleus</keyword>
<keyword id="KW-0597">Phosphoprotein</keyword>
<keyword id="KW-1185">Reference proteome</keyword>
<proteinExistence type="evidence at protein level"/>
<feature type="chain" id="PRO_0000087149" description="Protein FRA10AC1 homolog">
    <location>
        <begin position="1"/>
        <end position="315"/>
    </location>
</feature>
<feature type="region of interest" description="Disordered" evidence="3">
    <location>
        <begin position="1"/>
        <end position="28"/>
    </location>
</feature>
<feature type="region of interest" description="Disordered" evidence="3">
    <location>
        <begin position="225"/>
        <end position="308"/>
    </location>
</feature>
<feature type="compositionally biased region" description="Basic residues" evidence="3">
    <location>
        <begin position="225"/>
        <end position="235"/>
    </location>
</feature>
<feature type="compositionally biased region" description="Basic and acidic residues" evidence="3">
    <location>
        <begin position="236"/>
        <end position="245"/>
    </location>
</feature>
<feature type="compositionally biased region" description="Basic and acidic residues" evidence="3">
    <location>
        <begin position="255"/>
        <end position="278"/>
    </location>
</feature>
<feature type="modified residue" description="N-acetylmethionine" evidence="5">
    <location>
        <position position="1"/>
    </location>
</feature>
<feature type="modified residue" description="Phosphoserine" evidence="1">
    <location>
        <position position="9"/>
    </location>
</feature>
<feature type="modified residue" description="Phosphoserine" evidence="5">
    <location>
        <position position="12"/>
    </location>
</feature>
<feature type="modified residue" description="N6-acetyllysine" evidence="7">
    <location>
        <position position="36"/>
    </location>
</feature>
<feature type="modified residue" description="Phosphoserine" evidence="5 6">
    <location>
        <position position="283"/>
    </location>
</feature>
<feature type="modified residue" description="Phosphoserine" evidence="5 6">
    <location>
        <position position="285"/>
    </location>
</feature>
<feature type="sequence conflict" description="In Ref. 1; BAC36871." evidence="4" ref="1">
    <original>M</original>
    <variation>K</variation>
    <location>
        <position position="1"/>
    </location>
</feature>
<feature type="sequence conflict" description="In Ref. 1; BAE42904." evidence="4" ref="1">
    <original>L</original>
    <variation>I</variation>
    <location>
        <position position="131"/>
    </location>
</feature>
<feature type="sequence conflict" description="In Ref. 1; BAC36871." evidence="4" ref="1">
    <original>S</original>
    <variation>F</variation>
    <location>
        <position position="287"/>
    </location>
</feature>
<feature type="sequence conflict" description="In Ref. 1; BAC36871." evidence="4" ref="1">
    <original>D</original>
    <variation>N</variation>
    <location>
        <position position="298"/>
    </location>
</feature>
<protein>
    <recommendedName>
        <fullName>Protein FRA10AC1 homolog</fullName>
    </recommendedName>
</protein>
<gene>
    <name type="primary">Fra10ac1</name>
</gene>